<dbReference type="EC" id="2.7.7.72" evidence="1"/>
<dbReference type="EMBL" id="CP001015">
    <property type="protein sequence ID" value="ACF55329.1"/>
    <property type="molecule type" value="Genomic_DNA"/>
</dbReference>
<dbReference type="SMR" id="B5E6J9"/>
<dbReference type="KEGG" id="spx:SPG_1482"/>
<dbReference type="HOGENOM" id="CLU_015961_3_1_9"/>
<dbReference type="GO" id="GO:0005524">
    <property type="term" value="F:ATP binding"/>
    <property type="evidence" value="ECO:0007669"/>
    <property type="project" value="UniProtKB-UniRule"/>
</dbReference>
<dbReference type="GO" id="GO:0004810">
    <property type="term" value="F:CCA tRNA nucleotidyltransferase activity"/>
    <property type="evidence" value="ECO:0007669"/>
    <property type="project" value="UniProtKB-UniRule"/>
</dbReference>
<dbReference type="GO" id="GO:0000287">
    <property type="term" value="F:magnesium ion binding"/>
    <property type="evidence" value="ECO:0007669"/>
    <property type="project" value="UniProtKB-UniRule"/>
</dbReference>
<dbReference type="GO" id="GO:0000049">
    <property type="term" value="F:tRNA binding"/>
    <property type="evidence" value="ECO:0007669"/>
    <property type="project" value="UniProtKB-UniRule"/>
</dbReference>
<dbReference type="GO" id="GO:0042245">
    <property type="term" value="P:RNA repair"/>
    <property type="evidence" value="ECO:0007669"/>
    <property type="project" value="UniProtKB-KW"/>
</dbReference>
<dbReference type="GO" id="GO:0001680">
    <property type="term" value="P:tRNA 3'-terminal CCA addition"/>
    <property type="evidence" value="ECO:0007669"/>
    <property type="project" value="UniProtKB-UniRule"/>
</dbReference>
<dbReference type="CDD" id="cd05398">
    <property type="entry name" value="NT_ClassII-CCAase"/>
    <property type="match status" value="1"/>
</dbReference>
<dbReference type="Gene3D" id="1.10.110.30">
    <property type="match status" value="1"/>
</dbReference>
<dbReference type="Gene3D" id="1.10.246.80">
    <property type="match status" value="1"/>
</dbReference>
<dbReference type="Gene3D" id="1.20.58.560">
    <property type="match status" value="1"/>
</dbReference>
<dbReference type="Gene3D" id="3.30.460.10">
    <property type="entry name" value="Beta Polymerase, domain 2"/>
    <property type="match status" value="1"/>
</dbReference>
<dbReference type="HAMAP" id="MF_01263">
    <property type="entry name" value="CCA_bact_type3"/>
    <property type="match status" value="1"/>
</dbReference>
<dbReference type="InterPro" id="IPR050264">
    <property type="entry name" value="Bact_CCA-adding_enz_type3_sf"/>
</dbReference>
<dbReference type="InterPro" id="IPR032810">
    <property type="entry name" value="CCA-adding_enz_C"/>
</dbReference>
<dbReference type="InterPro" id="IPR023068">
    <property type="entry name" value="CCA-adding_enz_firmicutes"/>
</dbReference>
<dbReference type="InterPro" id="IPR043519">
    <property type="entry name" value="NT_sf"/>
</dbReference>
<dbReference type="InterPro" id="IPR002646">
    <property type="entry name" value="PolA_pol_head_dom"/>
</dbReference>
<dbReference type="InterPro" id="IPR032828">
    <property type="entry name" value="PolyA_RNA-bd"/>
</dbReference>
<dbReference type="NCBIfam" id="NF009814">
    <property type="entry name" value="PRK13299.1"/>
    <property type="match status" value="1"/>
</dbReference>
<dbReference type="PANTHER" id="PTHR46173">
    <property type="entry name" value="CCA TRNA NUCLEOTIDYLTRANSFERASE 1, MITOCHONDRIAL"/>
    <property type="match status" value="1"/>
</dbReference>
<dbReference type="PANTHER" id="PTHR46173:SF1">
    <property type="entry name" value="CCA TRNA NUCLEOTIDYLTRANSFERASE 1, MITOCHONDRIAL"/>
    <property type="match status" value="1"/>
</dbReference>
<dbReference type="Pfam" id="PF01743">
    <property type="entry name" value="PolyA_pol"/>
    <property type="match status" value="1"/>
</dbReference>
<dbReference type="Pfam" id="PF12627">
    <property type="entry name" value="PolyA_pol_RNAbd"/>
    <property type="match status" value="1"/>
</dbReference>
<dbReference type="Pfam" id="PF13735">
    <property type="entry name" value="tRNA_NucTran2_2"/>
    <property type="match status" value="1"/>
</dbReference>
<dbReference type="SUPFAM" id="SSF81301">
    <property type="entry name" value="Nucleotidyltransferase"/>
    <property type="match status" value="1"/>
</dbReference>
<dbReference type="SUPFAM" id="SSF81891">
    <property type="entry name" value="Poly A polymerase C-terminal region-like"/>
    <property type="match status" value="1"/>
</dbReference>
<sequence length="399" mass="45800">MRLTQMPSEFQKALPVLEKIKEAGFEAYFVGGSVRDALLHNPIHDVDIATSSYPEETKQIFPRTADIGIEHGTVLVLDGDEEYEVTTFRTEDVYVDYRRPSAVSFVRSLEEDLKRRDFTVNAFALDETGEIVDLFHGLEDLEKQVLRAVGVASERFNEDALRIMRGFRFQASLGFALEPETFKAMKTLTPLLENISVERTFVEFDKLLLAPFWRRGLASMIESQAYDYLPDMASSQDKLNRLFDLETDFTFESSEQAWAALLWALEIENAQSFLKSWKTSRQFAKQVQDLLIILALRENGELSKRDCYRFDIDLLLQAENLRQAQGKEVNPQAITEKYQSLTIHDKKEIQINGGILIKEYGYQPGPDLGEILTEIEFAIVDGELENNREAIHAYLREKK</sequence>
<reference key="1">
    <citation type="journal article" date="2001" name="Microb. Drug Resist.">
        <title>Annotated draft genomic sequence from a Streptococcus pneumoniae type 19F clinical isolate.</title>
        <authorList>
            <person name="Dopazo J."/>
            <person name="Mendoza A."/>
            <person name="Herrero J."/>
            <person name="Caldara F."/>
            <person name="Humbert Y."/>
            <person name="Friedli L."/>
            <person name="Guerrier M."/>
            <person name="Grand-Schenk E."/>
            <person name="Gandin C."/>
            <person name="de Francesco M."/>
            <person name="Polissi A."/>
            <person name="Buell G."/>
            <person name="Feger G."/>
            <person name="Garcia E."/>
            <person name="Peitsch M."/>
            <person name="Garcia-Bustos J.F."/>
        </authorList>
    </citation>
    <scope>NUCLEOTIDE SEQUENCE [LARGE SCALE GENOMIC DNA]</scope>
    <source>
        <strain>G54</strain>
    </source>
</reference>
<reference key="2">
    <citation type="submission" date="2008-03" db="EMBL/GenBank/DDBJ databases">
        <title>Pneumococcal beta glucoside metabolism investigated by whole genome comparison.</title>
        <authorList>
            <person name="Mulas L."/>
            <person name="Trappetti C."/>
            <person name="Hakenbeck R."/>
            <person name="Iannelli F."/>
            <person name="Pozzi G."/>
            <person name="Davidsen T.M."/>
            <person name="Tettelin H."/>
            <person name="Oggioni M."/>
        </authorList>
    </citation>
    <scope>NUCLEOTIDE SEQUENCE [LARGE SCALE GENOMIC DNA]</scope>
    <source>
        <strain>G54</strain>
    </source>
</reference>
<proteinExistence type="inferred from homology"/>
<accession>B5E6J9</accession>
<keyword id="KW-0067">ATP-binding</keyword>
<keyword id="KW-0460">Magnesium</keyword>
<keyword id="KW-0479">Metal-binding</keyword>
<keyword id="KW-0547">Nucleotide-binding</keyword>
<keyword id="KW-0548">Nucleotidyltransferase</keyword>
<keyword id="KW-0692">RNA repair</keyword>
<keyword id="KW-0694">RNA-binding</keyword>
<keyword id="KW-0808">Transferase</keyword>
<keyword id="KW-0819">tRNA processing</keyword>
<feature type="chain" id="PRO_1000140077" description="CCA-adding enzyme">
    <location>
        <begin position="1"/>
        <end position="399"/>
    </location>
</feature>
<feature type="binding site" evidence="1">
    <location>
        <position position="32"/>
    </location>
    <ligand>
        <name>ATP</name>
        <dbReference type="ChEBI" id="CHEBI:30616"/>
    </ligand>
</feature>
<feature type="binding site" evidence="1">
    <location>
        <position position="32"/>
    </location>
    <ligand>
        <name>CTP</name>
        <dbReference type="ChEBI" id="CHEBI:37563"/>
    </ligand>
</feature>
<feature type="binding site" evidence="1">
    <location>
        <position position="35"/>
    </location>
    <ligand>
        <name>ATP</name>
        <dbReference type="ChEBI" id="CHEBI:30616"/>
    </ligand>
</feature>
<feature type="binding site" evidence="1">
    <location>
        <position position="35"/>
    </location>
    <ligand>
        <name>CTP</name>
        <dbReference type="ChEBI" id="CHEBI:37563"/>
    </ligand>
</feature>
<feature type="binding site" evidence="1">
    <location>
        <position position="45"/>
    </location>
    <ligand>
        <name>Mg(2+)</name>
        <dbReference type="ChEBI" id="CHEBI:18420"/>
    </ligand>
</feature>
<feature type="binding site" evidence="1">
    <location>
        <position position="47"/>
    </location>
    <ligand>
        <name>Mg(2+)</name>
        <dbReference type="ChEBI" id="CHEBI:18420"/>
    </ligand>
</feature>
<feature type="binding site" evidence="1">
    <location>
        <position position="116"/>
    </location>
    <ligand>
        <name>ATP</name>
        <dbReference type="ChEBI" id="CHEBI:30616"/>
    </ligand>
</feature>
<feature type="binding site" evidence="1">
    <location>
        <position position="116"/>
    </location>
    <ligand>
        <name>CTP</name>
        <dbReference type="ChEBI" id="CHEBI:37563"/>
    </ligand>
</feature>
<feature type="binding site" evidence="1">
    <location>
        <position position="159"/>
    </location>
    <ligand>
        <name>ATP</name>
        <dbReference type="ChEBI" id="CHEBI:30616"/>
    </ligand>
</feature>
<feature type="binding site" evidence="1">
    <location>
        <position position="159"/>
    </location>
    <ligand>
        <name>CTP</name>
        <dbReference type="ChEBI" id="CHEBI:37563"/>
    </ligand>
</feature>
<feature type="binding site" evidence="1">
    <location>
        <position position="162"/>
    </location>
    <ligand>
        <name>ATP</name>
        <dbReference type="ChEBI" id="CHEBI:30616"/>
    </ligand>
</feature>
<feature type="binding site" evidence="1">
    <location>
        <position position="162"/>
    </location>
    <ligand>
        <name>CTP</name>
        <dbReference type="ChEBI" id="CHEBI:37563"/>
    </ligand>
</feature>
<feature type="binding site" evidence="1">
    <location>
        <position position="165"/>
    </location>
    <ligand>
        <name>ATP</name>
        <dbReference type="ChEBI" id="CHEBI:30616"/>
    </ligand>
</feature>
<feature type="binding site" evidence="1">
    <location>
        <position position="165"/>
    </location>
    <ligand>
        <name>CTP</name>
        <dbReference type="ChEBI" id="CHEBI:37563"/>
    </ligand>
</feature>
<feature type="binding site" evidence="1">
    <location>
        <position position="168"/>
    </location>
    <ligand>
        <name>ATP</name>
        <dbReference type="ChEBI" id="CHEBI:30616"/>
    </ligand>
</feature>
<feature type="binding site" evidence="1">
    <location>
        <position position="168"/>
    </location>
    <ligand>
        <name>CTP</name>
        <dbReference type="ChEBI" id="CHEBI:37563"/>
    </ligand>
</feature>
<name>CCA_STRP4</name>
<protein>
    <recommendedName>
        <fullName evidence="1">CCA-adding enzyme</fullName>
        <ecNumber evidence="1">2.7.7.72</ecNumber>
    </recommendedName>
    <alternativeName>
        <fullName evidence="1">CCA tRNA nucleotidyltransferase</fullName>
    </alternativeName>
    <alternativeName>
        <fullName evidence="1">tRNA CCA-pyrophosphorylase</fullName>
    </alternativeName>
    <alternativeName>
        <fullName evidence="1">tRNA adenylyl-/cytidylyl- transferase</fullName>
    </alternativeName>
    <alternativeName>
        <fullName evidence="1">tRNA nucleotidyltransferase</fullName>
    </alternativeName>
    <alternativeName>
        <fullName evidence="1">tRNA-NT</fullName>
    </alternativeName>
</protein>
<evidence type="ECO:0000255" key="1">
    <source>
        <dbReference type="HAMAP-Rule" id="MF_01263"/>
    </source>
</evidence>
<comment type="function">
    <text evidence="1">Catalyzes the addition and repair of the essential 3'-terminal CCA sequence in tRNAs without using a nucleic acid template. Adds these three nucleotides in the order of C, C, and A to the tRNA nucleotide-73, using CTP and ATP as substrates and producing inorganic pyrophosphate. tRNA 3'-terminal CCA addition is required both for tRNA processing and repair. Also involved in tRNA surveillance by mediating tandem CCA addition to generate a CCACCA at the 3' terminus of unstable tRNAs. While stable tRNAs receive only 3'-terminal CCA, unstable tRNAs are marked with CCACCA and rapidly degraded.</text>
</comment>
<comment type="catalytic activity">
    <reaction evidence="1">
        <text>a tRNA precursor + 2 CTP + ATP = a tRNA with a 3' CCA end + 3 diphosphate</text>
        <dbReference type="Rhea" id="RHEA:14433"/>
        <dbReference type="Rhea" id="RHEA-COMP:10465"/>
        <dbReference type="Rhea" id="RHEA-COMP:10468"/>
        <dbReference type="ChEBI" id="CHEBI:30616"/>
        <dbReference type="ChEBI" id="CHEBI:33019"/>
        <dbReference type="ChEBI" id="CHEBI:37563"/>
        <dbReference type="ChEBI" id="CHEBI:74896"/>
        <dbReference type="ChEBI" id="CHEBI:83071"/>
        <dbReference type="EC" id="2.7.7.72"/>
    </reaction>
</comment>
<comment type="catalytic activity">
    <reaction evidence="1">
        <text>a tRNA with a 3' CCA end + 2 CTP + ATP = a tRNA with a 3' CCACCA end + 3 diphosphate</text>
        <dbReference type="Rhea" id="RHEA:76235"/>
        <dbReference type="Rhea" id="RHEA-COMP:10468"/>
        <dbReference type="Rhea" id="RHEA-COMP:18655"/>
        <dbReference type="ChEBI" id="CHEBI:30616"/>
        <dbReference type="ChEBI" id="CHEBI:33019"/>
        <dbReference type="ChEBI" id="CHEBI:37563"/>
        <dbReference type="ChEBI" id="CHEBI:83071"/>
        <dbReference type="ChEBI" id="CHEBI:195187"/>
    </reaction>
    <physiologicalReaction direction="left-to-right" evidence="1">
        <dbReference type="Rhea" id="RHEA:76236"/>
    </physiologicalReaction>
</comment>
<comment type="cofactor">
    <cofactor evidence="1">
        <name>Mg(2+)</name>
        <dbReference type="ChEBI" id="CHEBI:18420"/>
    </cofactor>
</comment>
<comment type="subunit">
    <text evidence="1">Homodimer.</text>
</comment>
<comment type="miscellaneous">
    <text evidence="1">A single active site specifically recognizes both ATP and CTP and is responsible for their addition.</text>
</comment>
<comment type="similarity">
    <text evidence="1">Belongs to the tRNA nucleotidyltransferase/poly(A) polymerase family. Bacterial CCA-adding enzyme type 3 subfamily.</text>
</comment>
<gene>
    <name evidence="1" type="primary">cca</name>
    <name type="ordered locus">SPG_1482</name>
</gene>
<organism>
    <name type="scientific">Streptococcus pneumoniae serotype 19F (strain G54)</name>
    <dbReference type="NCBI Taxonomy" id="512566"/>
    <lineage>
        <taxon>Bacteria</taxon>
        <taxon>Bacillati</taxon>
        <taxon>Bacillota</taxon>
        <taxon>Bacilli</taxon>
        <taxon>Lactobacillales</taxon>
        <taxon>Streptococcaceae</taxon>
        <taxon>Streptococcus</taxon>
    </lineage>
</organism>